<gene>
    <name type="primary">ymoA</name>
    <name type="synonym">hha</name>
    <name type="ordered locus">YPO3138</name>
    <name type="ordered locus">y1046</name>
    <name type="ordered locus">YP_0793</name>
</gene>
<organism>
    <name type="scientific">Yersinia pestis</name>
    <dbReference type="NCBI Taxonomy" id="632"/>
    <lineage>
        <taxon>Bacteria</taxon>
        <taxon>Pseudomonadati</taxon>
        <taxon>Pseudomonadota</taxon>
        <taxon>Gammaproteobacteria</taxon>
        <taxon>Enterobacterales</taxon>
        <taxon>Yersiniaceae</taxon>
        <taxon>Yersinia</taxon>
    </lineage>
</organism>
<sequence>MTKTDYLMRLRKCTTIDTLERVIEKNKYELSDDELELFYSAADHRLAELTMNKLYDKIPPTVWQHVK</sequence>
<protein>
    <recommendedName>
        <fullName>Modulating protein YmoA</fullName>
    </recommendedName>
    <alternativeName>
        <fullName>Histone-like protein</fullName>
    </alternativeName>
</protein>
<keyword id="KW-0002">3D-structure</keyword>
<keyword id="KW-0238">DNA-binding</keyword>
<keyword id="KW-1185">Reference proteome</keyword>
<keyword id="KW-0804">Transcription</keyword>
<keyword id="KW-0805">Transcription regulation</keyword>
<evidence type="ECO:0000250" key="1">
    <source>
        <dbReference type="UniProtKB" id="P0A3X1"/>
    </source>
</evidence>
<evidence type="ECO:0000305" key="2"/>
<evidence type="ECO:0007829" key="3">
    <source>
        <dbReference type="PDB" id="2K5S"/>
    </source>
</evidence>
<accession>P0A3X0</accession>
<accession>P27720</accession>
<accession>Q0WCE5</accession>
<name>YMOA_YERPE</name>
<reference key="1">
    <citation type="journal article" date="2001" name="Nature">
        <title>Genome sequence of Yersinia pestis, the causative agent of plague.</title>
        <authorList>
            <person name="Parkhill J."/>
            <person name="Wren B.W."/>
            <person name="Thomson N.R."/>
            <person name="Titball R.W."/>
            <person name="Holden M.T.G."/>
            <person name="Prentice M.B."/>
            <person name="Sebaihia M."/>
            <person name="James K.D."/>
            <person name="Churcher C.M."/>
            <person name="Mungall K.L."/>
            <person name="Baker S."/>
            <person name="Basham D."/>
            <person name="Bentley S.D."/>
            <person name="Brooks K."/>
            <person name="Cerdeno-Tarraga A.-M."/>
            <person name="Chillingworth T."/>
            <person name="Cronin A."/>
            <person name="Davies R.M."/>
            <person name="Davis P."/>
            <person name="Dougan G."/>
            <person name="Feltwell T."/>
            <person name="Hamlin N."/>
            <person name="Holroyd S."/>
            <person name="Jagels K."/>
            <person name="Karlyshev A.V."/>
            <person name="Leather S."/>
            <person name="Moule S."/>
            <person name="Oyston P.C.F."/>
            <person name="Quail M.A."/>
            <person name="Rutherford K.M."/>
            <person name="Simmonds M."/>
            <person name="Skelton J."/>
            <person name="Stevens K."/>
            <person name="Whitehead S."/>
            <person name="Barrell B.G."/>
        </authorList>
    </citation>
    <scope>NUCLEOTIDE SEQUENCE [LARGE SCALE GENOMIC DNA]</scope>
    <source>
        <strain>CO-92 / Biovar Orientalis</strain>
    </source>
</reference>
<reference key="2">
    <citation type="journal article" date="2002" name="J. Bacteriol.">
        <title>Genome sequence of Yersinia pestis KIM.</title>
        <authorList>
            <person name="Deng W."/>
            <person name="Burland V."/>
            <person name="Plunkett G. III"/>
            <person name="Boutin A."/>
            <person name="Mayhew G.F."/>
            <person name="Liss P."/>
            <person name="Perna N.T."/>
            <person name="Rose D.J."/>
            <person name="Mau B."/>
            <person name="Zhou S."/>
            <person name="Schwartz D.C."/>
            <person name="Fetherston J.D."/>
            <person name="Lindler L.E."/>
            <person name="Brubaker R.R."/>
            <person name="Plano G.V."/>
            <person name="Straley S.C."/>
            <person name="McDonough K.A."/>
            <person name="Nilles M.L."/>
            <person name="Matson J.S."/>
            <person name="Blattner F.R."/>
            <person name="Perry R.D."/>
        </authorList>
    </citation>
    <scope>NUCLEOTIDE SEQUENCE [LARGE SCALE GENOMIC DNA]</scope>
    <source>
        <strain>KIM10+ / Biovar Mediaevalis</strain>
    </source>
</reference>
<reference key="3">
    <citation type="journal article" date="2004" name="DNA Res.">
        <title>Complete genome sequence of Yersinia pestis strain 91001, an isolate avirulent to humans.</title>
        <authorList>
            <person name="Song Y."/>
            <person name="Tong Z."/>
            <person name="Wang J."/>
            <person name="Wang L."/>
            <person name="Guo Z."/>
            <person name="Han Y."/>
            <person name="Zhang J."/>
            <person name="Pei D."/>
            <person name="Zhou D."/>
            <person name="Qin H."/>
            <person name="Pang X."/>
            <person name="Han Y."/>
            <person name="Zhai J."/>
            <person name="Li M."/>
            <person name="Cui B."/>
            <person name="Qi Z."/>
            <person name="Jin L."/>
            <person name="Dai R."/>
            <person name="Chen F."/>
            <person name="Li S."/>
            <person name="Ye C."/>
            <person name="Du Z."/>
            <person name="Lin W."/>
            <person name="Wang J."/>
            <person name="Yu J."/>
            <person name="Yang H."/>
            <person name="Wang J."/>
            <person name="Huang P."/>
            <person name="Yang R."/>
        </authorList>
    </citation>
    <scope>NUCLEOTIDE SEQUENCE [LARGE SCALE GENOMIC DNA]</scope>
    <source>
        <strain>91001 / Biovar Mediaevalis</strain>
    </source>
</reference>
<reference key="4">
    <citation type="journal article" date="2007" name="Biochemistry">
        <title>The high-precision solution structure of Yersinia modulating protein YmoA provides insight into interaction with H-NS.</title>
        <authorList>
            <person name="McFeeters R.L."/>
            <person name="Altieri A.S."/>
            <person name="Cherry S."/>
            <person name="Tropea J.E."/>
            <person name="Waugh D.S."/>
            <person name="Byrd R.A."/>
        </authorList>
    </citation>
    <scope>STRUCTURE BY NMR OF 2-67</scope>
    <scope>SUBUNIT</scope>
    <source>
        <strain>195/P</strain>
    </source>
</reference>
<feature type="chain" id="PRO_0000201732" description="Modulating protein YmoA">
    <location>
        <begin position="1"/>
        <end position="67"/>
    </location>
</feature>
<feature type="helix" evidence="3">
    <location>
        <begin position="3"/>
        <end position="11"/>
    </location>
</feature>
<feature type="helix" evidence="3">
    <location>
        <begin position="16"/>
        <end position="29"/>
    </location>
</feature>
<feature type="helix" evidence="3">
    <location>
        <begin position="32"/>
        <end position="42"/>
    </location>
</feature>
<feature type="helix" evidence="3">
    <location>
        <begin position="44"/>
        <end position="50"/>
    </location>
</feature>
<feature type="helix" evidence="3">
    <location>
        <begin position="61"/>
        <end position="65"/>
    </location>
</feature>
<dbReference type="EMBL" id="AL590842">
    <property type="protein sequence ID" value="CAL21733.1"/>
    <property type="molecule type" value="Genomic_DNA"/>
</dbReference>
<dbReference type="EMBL" id="AE009952">
    <property type="protein sequence ID" value="AAM84627.1"/>
    <property type="molecule type" value="Genomic_DNA"/>
</dbReference>
<dbReference type="EMBL" id="AE017042">
    <property type="protein sequence ID" value="AAS61058.1"/>
    <property type="molecule type" value="Genomic_DNA"/>
</dbReference>
<dbReference type="PIR" id="AB0381">
    <property type="entry name" value="AB0381"/>
</dbReference>
<dbReference type="RefSeq" id="WP_002208622.1">
    <property type="nucleotide sequence ID" value="NZ_WUCM01000009.1"/>
</dbReference>
<dbReference type="RefSeq" id="YP_002348043.1">
    <property type="nucleotide sequence ID" value="NC_003143.1"/>
</dbReference>
<dbReference type="PDB" id="2K5S">
    <property type="method" value="NMR"/>
    <property type="chains" value="A=2-67"/>
</dbReference>
<dbReference type="PDBsum" id="2K5S"/>
<dbReference type="BMRB" id="P0A3X0"/>
<dbReference type="SMR" id="P0A3X0"/>
<dbReference type="STRING" id="214092.YPO3138"/>
<dbReference type="PaxDb" id="214092-YPO3138"/>
<dbReference type="DNASU" id="1145993"/>
<dbReference type="EnsemblBacteria" id="AAS61058">
    <property type="protein sequence ID" value="AAS61058"/>
    <property type="gene ID" value="YP_0793"/>
</dbReference>
<dbReference type="GeneID" id="97457253"/>
<dbReference type="KEGG" id="ype:YPO3138"/>
<dbReference type="KEGG" id="ypk:y1046"/>
<dbReference type="KEGG" id="ypm:YP_0793"/>
<dbReference type="PATRIC" id="fig|214092.21.peg.3595"/>
<dbReference type="eggNOG" id="ENOG5032SGA">
    <property type="taxonomic scope" value="Bacteria"/>
</dbReference>
<dbReference type="HOGENOM" id="CLU_190629_0_0_6"/>
<dbReference type="OMA" id="RRCQSID"/>
<dbReference type="OrthoDB" id="6445588at2"/>
<dbReference type="EvolutionaryTrace" id="P0A3X0"/>
<dbReference type="PHI-base" id="PHI:3819"/>
<dbReference type="Proteomes" id="UP000000815">
    <property type="component" value="Chromosome"/>
</dbReference>
<dbReference type="Proteomes" id="UP000001019">
    <property type="component" value="Chromosome"/>
</dbReference>
<dbReference type="Proteomes" id="UP000002490">
    <property type="component" value="Chromosome"/>
</dbReference>
<dbReference type="GO" id="GO:0003677">
    <property type="term" value="F:DNA binding"/>
    <property type="evidence" value="ECO:0007669"/>
    <property type="project" value="UniProtKB-KW"/>
</dbReference>
<dbReference type="Gene3D" id="1.20.1280.40">
    <property type="entry name" value="HHA"/>
    <property type="match status" value="1"/>
</dbReference>
<dbReference type="InterPro" id="IPR007985">
    <property type="entry name" value="Hemolysn_expr_modulating_HHA"/>
</dbReference>
<dbReference type="InterPro" id="IPR036666">
    <property type="entry name" value="HHA_sf"/>
</dbReference>
<dbReference type="NCBIfam" id="NF008191">
    <property type="entry name" value="PRK10945.1"/>
    <property type="match status" value="1"/>
</dbReference>
<dbReference type="Pfam" id="PF05321">
    <property type="entry name" value="HHA"/>
    <property type="match status" value="1"/>
</dbReference>
<dbReference type="SUPFAM" id="SSF68989">
    <property type="entry name" value="Hemolysin expression modulating protein HHA"/>
    <property type="match status" value="1"/>
</dbReference>
<comment type="function">
    <text evidence="1">Modulates the thermoregulation of VirF, and hence the yop regulon, as well as the expression of the enterotoxin gene yst. Involved in chromosome structure and DNA topology; probably by means of compaction of DNA in conjunction with H-NS; probably requires H-NS to bind DNA (By similarity).</text>
</comment>
<comment type="subunit">
    <text evidence="1">Monomer (PubMed:18001134). Interacts with H-NS, in the absence of DNA (By similarity).</text>
</comment>
<comment type="similarity">
    <text evidence="2">Belongs to the Hha/YmoA/Cnu family.</text>
</comment>
<proteinExistence type="evidence at protein level"/>